<name>COL_BOVIN</name>
<gene>
    <name type="primary">CLPS</name>
</gene>
<dbReference type="EMBL" id="BC126854">
    <property type="protein sequence ID" value="AAI26855.1"/>
    <property type="molecule type" value="mRNA"/>
</dbReference>
<dbReference type="EMBL" id="BC142041">
    <property type="protein sequence ID" value="AAI42042.1"/>
    <property type="molecule type" value="mRNA"/>
</dbReference>
<dbReference type="RefSeq" id="NP_001071435.1">
    <property type="nucleotide sequence ID" value="NM_001077967.2"/>
</dbReference>
<dbReference type="SMR" id="A0JNQ7"/>
<dbReference type="FunCoup" id="A0JNQ7">
    <property type="interactions" value="62"/>
</dbReference>
<dbReference type="STRING" id="9913.ENSBTAP00000022391"/>
<dbReference type="PaxDb" id="9913-ENSBTAP00000022391"/>
<dbReference type="GeneID" id="525923"/>
<dbReference type="KEGG" id="bta:525923"/>
<dbReference type="CTD" id="1208"/>
<dbReference type="VEuPathDB" id="HostDB:ENSBTAG00000016833"/>
<dbReference type="eggNOG" id="ENOG502S4NY">
    <property type="taxonomic scope" value="Eukaryota"/>
</dbReference>
<dbReference type="HOGENOM" id="CLU_165591_0_0_1"/>
<dbReference type="InParanoid" id="A0JNQ7"/>
<dbReference type="OMA" id="CSPKTLY"/>
<dbReference type="OrthoDB" id="9826993at2759"/>
<dbReference type="TreeFam" id="TF336178"/>
<dbReference type="Reactome" id="R-BTA-192456">
    <property type="pathway name" value="Digestion of dietary lipid"/>
</dbReference>
<dbReference type="Reactome" id="R-BTA-975634">
    <property type="pathway name" value="Retinoid metabolism and transport"/>
</dbReference>
<dbReference type="Proteomes" id="UP000009136">
    <property type="component" value="Chromosome 23"/>
</dbReference>
<dbReference type="Bgee" id="ENSBTAG00000016833">
    <property type="expression patterns" value="Expressed in urinary bladder and 13 other cell types or tissues"/>
</dbReference>
<dbReference type="GO" id="GO:0005576">
    <property type="term" value="C:extracellular region"/>
    <property type="evidence" value="ECO:0007669"/>
    <property type="project" value="UniProtKB-SubCell"/>
</dbReference>
<dbReference type="GO" id="GO:0008047">
    <property type="term" value="F:enzyme activator activity"/>
    <property type="evidence" value="ECO:0007669"/>
    <property type="project" value="InterPro"/>
</dbReference>
<dbReference type="GO" id="GO:0035473">
    <property type="term" value="F:lipase binding"/>
    <property type="evidence" value="ECO:0007669"/>
    <property type="project" value="InterPro"/>
</dbReference>
<dbReference type="GO" id="GO:0007586">
    <property type="term" value="P:digestion"/>
    <property type="evidence" value="ECO:0007669"/>
    <property type="project" value="UniProtKB-KW"/>
</dbReference>
<dbReference type="GO" id="GO:0016042">
    <property type="term" value="P:lipid catabolic process"/>
    <property type="evidence" value="ECO:0007669"/>
    <property type="project" value="UniProtKB-KW"/>
</dbReference>
<dbReference type="GO" id="GO:0032094">
    <property type="term" value="P:response to food"/>
    <property type="evidence" value="ECO:0000318"/>
    <property type="project" value="GO_Central"/>
</dbReference>
<dbReference type="CDD" id="cd23011">
    <property type="entry name" value="CLPS"/>
    <property type="match status" value="1"/>
</dbReference>
<dbReference type="FunFam" id="2.10.80.10:FF:000005">
    <property type="entry name" value="Colipase"/>
    <property type="match status" value="1"/>
</dbReference>
<dbReference type="Gene3D" id="2.10.80.10">
    <property type="entry name" value="Lipase, subunit A"/>
    <property type="match status" value="1"/>
</dbReference>
<dbReference type="InterPro" id="IPR047576">
    <property type="entry name" value="CLPS_chr"/>
</dbReference>
<dbReference type="InterPro" id="IPR001981">
    <property type="entry name" value="Colipase"/>
</dbReference>
<dbReference type="InterPro" id="IPR017914">
    <property type="entry name" value="Colipase_C"/>
</dbReference>
<dbReference type="InterPro" id="IPR017915">
    <property type="entry name" value="Colipase_CS"/>
</dbReference>
<dbReference type="InterPro" id="IPR017913">
    <property type="entry name" value="Colipase_N"/>
</dbReference>
<dbReference type="PANTHER" id="PTHR10041">
    <property type="entry name" value="COLIPASE"/>
    <property type="match status" value="1"/>
</dbReference>
<dbReference type="PANTHER" id="PTHR10041:SF8">
    <property type="entry name" value="COLIPASE"/>
    <property type="match status" value="1"/>
</dbReference>
<dbReference type="Pfam" id="PF01114">
    <property type="entry name" value="Colipase"/>
    <property type="match status" value="1"/>
</dbReference>
<dbReference type="Pfam" id="PF02740">
    <property type="entry name" value="Colipase_C"/>
    <property type="match status" value="1"/>
</dbReference>
<dbReference type="PRINTS" id="PR00128">
    <property type="entry name" value="COLIPASE"/>
</dbReference>
<dbReference type="SMART" id="SM00023">
    <property type="entry name" value="COLIPASE"/>
    <property type="match status" value="1"/>
</dbReference>
<dbReference type="SUPFAM" id="SSF57190">
    <property type="entry name" value="Colipase-like"/>
    <property type="match status" value="2"/>
</dbReference>
<dbReference type="PROSITE" id="PS00121">
    <property type="entry name" value="COLIPASE_1"/>
    <property type="match status" value="1"/>
</dbReference>
<dbReference type="PROSITE" id="PS51342">
    <property type="entry name" value="COLIPASE_2"/>
    <property type="match status" value="1"/>
</dbReference>
<evidence type="ECO:0000250" key="1"/>
<evidence type="ECO:0000250" key="2">
    <source>
        <dbReference type="UniProtKB" id="P04118"/>
    </source>
</evidence>
<evidence type="ECO:0000255" key="3"/>
<evidence type="ECO:0000255" key="4">
    <source>
        <dbReference type="PROSITE-ProRule" id="PRU00674"/>
    </source>
</evidence>
<reference key="1">
    <citation type="submission" date="2007-06" db="EMBL/GenBank/DDBJ databases">
        <authorList>
            <consortium name="NIH - Mammalian Gene Collection (MGC) project"/>
        </authorList>
    </citation>
    <scope>NUCLEOTIDE SEQUENCE [LARGE SCALE MRNA]</scope>
    <source>
        <strain>Hereford</strain>
        <tissue>Fetal pancreas</tissue>
    </source>
</reference>
<protein>
    <recommendedName>
        <fullName>Colipase</fullName>
    </recommendedName>
</protein>
<feature type="signal peptide" evidence="1">
    <location>
        <begin position="1"/>
        <end position="17"/>
    </location>
</feature>
<feature type="propeptide" id="PRO_0000314946" description="Enterostatin, activation peptide" evidence="3">
    <location>
        <begin position="18"/>
        <end position="22"/>
    </location>
</feature>
<feature type="chain" id="PRO_0000314947" description="Colipase">
    <location>
        <begin position="23"/>
        <end position="112"/>
    </location>
</feature>
<feature type="disulfide bond" evidence="4">
    <location>
        <begin position="34"/>
        <end position="45"/>
    </location>
</feature>
<feature type="disulfide bond" evidence="4">
    <location>
        <begin position="40"/>
        <end position="56"/>
    </location>
</feature>
<feature type="disulfide bond" evidence="4">
    <location>
        <begin position="44"/>
        <end position="78"/>
    </location>
</feature>
<feature type="disulfide bond" evidence="4">
    <location>
        <begin position="66"/>
        <end position="86"/>
    </location>
</feature>
<feature type="disulfide bond" evidence="4">
    <location>
        <begin position="80"/>
        <end position="104"/>
    </location>
</feature>
<comment type="function">
    <text evidence="2">Colipase is a cofactor of pancreatic lipase. It allows the lipase to anchor itself to the lipid-water interface. Without colipase the enzyme is washed off by bile salts, which have an inhibitory effect on the lipase.</text>
</comment>
<comment type="function">
    <text evidence="2">Enterostatin has a biological activity as a satiety signal.</text>
</comment>
<comment type="subunit">
    <text evidence="4">Forms a 1:1 stoichiometric complex with pancreatic lipase.</text>
</comment>
<comment type="subcellular location">
    <subcellularLocation>
        <location evidence="4">Secreted</location>
    </subcellularLocation>
</comment>
<comment type="similarity">
    <text evidence="4">Belongs to the colipase family.</text>
</comment>
<organism>
    <name type="scientific">Bos taurus</name>
    <name type="common">Bovine</name>
    <dbReference type="NCBI Taxonomy" id="9913"/>
    <lineage>
        <taxon>Eukaryota</taxon>
        <taxon>Metazoa</taxon>
        <taxon>Chordata</taxon>
        <taxon>Craniata</taxon>
        <taxon>Vertebrata</taxon>
        <taxon>Euteleostomi</taxon>
        <taxon>Mammalia</taxon>
        <taxon>Eutheria</taxon>
        <taxon>Laurasiatheria</taxon>
        <taxon>Artiodactyla</taxon>
        <taxon>Ruminantia</taxon>
        <taxon>Pecora</taxon>
        <taxon>Bovidae</taxon>
        <taxon>Bovinae</taxon>
        <taxon>Bos</taxon>
    </lineage>
</organism>
<sequence length="112" mass="12051">MEKVLILLLVALAVAYAVPDPRGIIINLDEGELCLNSAQCTSKCCHREDGLSLARCAPKASENSECSAFTLYGIYYKCPCERGLTCNVDKTIVGSITNTNFGVCLDLGRATE</sequence>
<keyword id="KW-0222">Digestion</keyword>
<keyword id="KW-1015">Disulfide bond</keyword>
<keyword id="KW-0442">Lipid degradation</keyword>
<keyword id="KW-0443">Lipid metabolism</keyword>
<keyword id="KW-1185">Reference proteome</keyword>
<keyword id="KW-0964">Secreted</keyword>
<keyword id="KW-0732">Signal</keyword>
<accession>A0JNQ7</accession>
<proteinExistence type="inferred from homology"/>